<comment type="function">
    <text evidence="1 3">Iron-sulfur protein (IP) subunit of the succinate dehydrogenase complex (mitochondrial respiratory chain complex II), responsible for transferring electrons from succinate to ubiquinone (coenzyme Q) (By similarity). SDH also oxidizes malate to the non-canonical enol form of oxaloacetate, enol-oxaloacetate. Enol-oxaloacetate, which is a potent inhibitor of the succinate dehydrogenase activity, is further isomerized into keto-oxaloacetate (By similarity).</text>
</comment>
<comment type="catalytic activity">
    <reaction evidence="1">
        <text>a quinone + succinate = fumarate + a quinol</text>
        <dbReference type="Rhea" id="RHEA:40523"/>
        <dbReference type="ChEBI" id="CHEBI:24646"/>
        <dbReference type="ChEBI" id="CHEBI:29806"/>
        <dbReference type="ChEBI" id="CHEBI:30031"/>
        <dbReference type="ChEBI" id="CHEBI:132124"/>
        <dbReference type="EC" id="1.3.5.1"/>
    </reaction>
</comment>
<comment type="catalytic activity">
    <reaction evidence="3">
        <text>(R)-malate + a quinone = enol-oxaloacetate + a quinol</text>
        <dbReference type="Rhea" id="RHEA:79827"/>
        <dbReference type="ChEBI" id="CHEBI:15588"/>
        <dbReference type="ChEBI" id="CHEBI:17479"/>
        <dbReference type="ChEBI" id="CHEBI:24646"/>
        <dbReference type="ChEBI" id="CHEBI:132124"/>
    </reaction>
    <physiologicalReaction direction="left-to-right" evidence="3">
        <dbReference type="Rhea" id="RHEA:79828"/>
    </physiologicalReaction>
</comment>
<comment type="catalytic activity">
    <reaction evidence="3">
        <text>(S)-malate + a quinone = enol-oxaloacetate + a quinol</text>
        <dbReference type="Rhea" id="RHEA:79831"/>
        <dbReference type="ChEBI" id="CHEBI:15589"/>
        <dbReference type="ChEBI" id="CHEBI:17479"/>
        <dbReference type="ChEBI" id="CHEBI:24646"/>
        <dbReference type="ChEBI" id="CHEBI:132124"/>
    </reaction>
    <physiologicalReaction direction="left-to-right" evidence="3">
        <dbReference type="Rhea" id="RHEA:79832"/>
    </physiologicalReaction>
</comment>
<comment type="cofactor">
    <cofactor evidence="2">
        <name>[2Fe-2S] cluster</name>
        <dbReference type="ChEBI" id="CHEBI:190135"/>
    </cofactor>
    <text evidence="2">Binds 1 [2Fe-2S] cluster.</text>
</comment>
<comment type="cofactor">
    <cofactor evidence="2">
        <name>[3Fe-4S] cluster</name>
        <dbReference type="ChEBI" id="CHEBI:21137"/>
    </cofactor>
    <text evidence="2">Binds 1 [3Fe-4S] cluster.</text>
</comment>
<comment type="cofactor">
    <cofactor evidence="2">
        <name>[4Fe-4S] cluster</name>
        <dbReference type="ChEBI" id="CHEBI:49883"/>
    </cofactor>
    <text evidence="2">Binds 1 [4Fe-4S] cluster.</text>
</comment>
<comment type="activity regulation">
    <text evidence="3">Enol-oxaloacetate inhibits the succinate dehydrogenase activity.</text>
</comment>
<comment type="pathway">
    <text>Carbohydrate metabolism; tricarboxylic acid cycle; fumarate from succinate (eukaryal route): step 1/1.</text>
</comment>
<comment type="subunit">
    <text evidence="1 2">Component of complex II composed of four subunits: the flavoprotein (FP) SDHA, iron-sulfur protein (IP) SDHB, and a cytochrome b560 composed of SDHC and SDHD (By similarity). Interacts with SDHAF1; the interaction is required for iron-sulfur cluster incorporation into SDHB (By similarity).</text>
</comment>
<comment type="subcellular location">
    <subcellularLocation>
        <location evidence="5">Mitochondrion inner membrane</location>
        <topology evidence="5">Peripheral membrane protein</topology>
        <orientation evidence="5">Matrix side</orientation>
    </subcellularLocation>
</comment>
<comment type="similarity">
    <text evidence="8">Belongs to the succinate dehydrogenase/fumarate reductase iron-sulfur protein family.</text>
</comment>
<name>SDHB_RAT</name>
<keyword id="KW-0001">2Fe-2S</keyword>
<keyword id="KW-0003">3Fe-4S</keyword>
<keyword id="KW-0004">4Fe-4S</keyword>
<keyword id="KW-0007">Acetylation</keyword>
<keyword id="KW-0249">Electron transport</keyword>
<keyword id="KW-0408">Iron</keyword>
<keyword id="KW-0411">Iron-sulfur</keyword>
<keyword id="KW-0472">Membrane</keyword>
<keyword id="KW-0479">Metal-binding</keyword>
<keyword id="KW-0496">Mitochondrion</keyword>
<keyword id="KW-0999">Mitochondrion inner membrane</keyword>
<keyword id="KW-0560">Oxidoreductase</keyword>
<keyword id="KW-1185">Reference proteome</keyword>
<keyword id="KW-0809">Transit peptide</keyword>
<keyword id="KW-0813">Transport</keyword>
<keyword id="KW-0816">Tricarboxylic acid cycle</keyword>
<reference key="1">
    <citation type="submission" date="2005-08" db="EMBL/GenBank/DDBJ databases">
        <authorList>
            <person name="Mural R.J."/>
            <person name="Adams M.D."/>
            <person name="Myers E.W."/>
            <person name="Smith H.O."/>
            <person name="Venter J.C."/>
        </authorList>
    </citation>
    <scope>NUCLEOTIDE SEQUENCE [LARGE SCALE GENOMIC DNA]</scope>
    <source>
        <strain>Brown Norway</strain>
    </source>
</reference>
<reference key="2">
    <citation type="journal article" date="2004" name="Genome Res.">
        <title>The status, quality, and expansion of the NIH full-length cDNA project: the Mammalian Gene Collection (MGC).</title>
        <authorList>
            <consortium name="The MGC Project Team"/>
        </authorList>
    </citation>
    <scope>NUCLEOTIDE SEQUENCE [LARGE SCALE MRNA]</scope>
    <source>
        <tissue>Placenta</tissue>
    </source>
</reference>
<reference key="3">
    <citation type="journal article" date="2006" name="Mol. Biol. Evol.">
        <title>Housekeeping genes for phylogenetic analysis of eutherian relationships.</title>
        <authorList>
            <person name="Kullberg M."/>
            <person name="Nilsson M.A."/>
            <person name="Arnason U."/>
            <person name="Harley E.H."/>
            <person name="Janke A."/>
        </authorList>
    </citation>
    <scope>NUCLEOTIDE SEQUENCE [MRNA] OF 26-257</scope>
    <source>
        <tissue>Liver</tissue>
    </source>
</reference>
<reference key="4">
    <citation type="journal article" date="1989" name="Proc. Natl. Acad. Sci. U.S.A.">
        <title>Use of the DNA polymerase chain reaction for homology probing: isolation of partial cDNA or genomic clones encoding the iron-sulfur protein of succinate dehydrogenase from several species.</title>
        <authorList>
            <person name="Gould S.J."/>
            <person name="Subramani S."/>
            <person name="Scheffler I.E."/>
        </authorList>
    </citation>
    <scope>NUCLEOTIDE SEQUENCE [MRNA] OF 109-251</scope>
    <source>
        <tissue>Brain cortex</tissue>
    </source>
</reference>
<reference key="5">
    <citation type="journal article" date="1993" name="Proc. Natl. Acad. Sci. U.S.A.">
        <authorList>
            <person name="Gould S.J."/>
            <person name="Subramani S."/>
            <person name="Scheffler I.E."/>
        </authorList>
    </citation>
    <scope>ERRATUM OF PUBMED:2494655</scope>
</reference>
<dbReference type="EC" id="1.3.5.1" evidence="1"/>
<dbReference type="EC" id="1.1.5.-" evidence="3"/>
<dbReference type="EMBL" id="CH473968">
    <property type="protein sequence ID" value="EDL80954.1"/>
    <property type="molecule type" value="Genomic_DNA"/>
</dbReference>
<dbReference type="EMBL" id="BC158620">
    <property type="protein sequence ID" value="AAI58621.1"/>
    <property type="molecule type" value="mRNA"/>
</dbReference>
<dbReference type="EMBL" id="DQ403001">
    <property type="protein sequence ID" value="ABD77134.1"/>
    <property type="molecule type" value="mRNA"/>
</dbReference>
<dbReference type="PIR" id="B32394">
    <property type="entry name" value="B32394"/>
</dbReference>
<dbReference type="RefSeq" id="NP_001094009.1">
    <property type="nucleotide sequence ID" value="NM_001100539.1"/>
</dbReference>
<dbReference type="SMR" id="P21913"/>
<dbReference type="BioGRID" id="255955">
    <property type="interactions" value="2"/>
</dbReference>
<dbReference type="ComplexPortal" id="CPX-564">
    <property type="entry name" value="Mitochondrial respiratory chain complex II"/>
</dbReference>
<dbReference type="CORUM" id="P21913"/>
<dbReference type="FunCoup" id="P21913">
    <property type="interactions" value="2595"/>
</dbReference>
<dbReference type="IntAct" id="P21913">
    <property type="interactions" value="2"/>
</dbReference>
<dbReference type="MINT" id="P21913"/>
<dbReference type="STRING" id="10116.ENSRNOP00000010593"/>
<dbReference type="CarbonylDB" id="P21913"/>
<dbReference type="GlyGen" id="P21913">
    <property type="glycosylation" value="1 site, 1 O-linked glycan (1 site)"/>
</dbReference>
<dbReference type="iPTMnet" id="P21913"/>
<dbReference type="PhosphoSitePlus" id="P21913"/>
<dbReference type="SwissPalm" id="P21913"/>
<dbReference type="jPOST" id="P21913"/>
<dbReference type="PaxDb" id="10116-ENSRNOP00000010593"/>
<dbReference type="Ensembl" id="ENSRNOT00000105563.1">
    <property type="protein sequence ID" value="ENSRNOP00000088032.1"/>
    <property type="gene ID" value="ENSRNOG00000007967.8"/>
</dbReference>
<dbReference type="GeneID" id="298596"/>
<dbReference type="KEGG" id="rno:298596"/>
<dbReference type="UCSC" id="RGD:1308598">
    <property type="organism name" value="rat"/>
</dbReference>
<dbReference type="AGR" id="RGD:1308598"/>
<dbReference type="CTD" id="6390"/>
<dbReference type="RGD" id="1308598">
    <property type="gene designation" value="Sdhb"/>
</dbReference>
<dbReference type="eggNOG" id="KOG3049">
    <property type="taxonomic scope" value="Eukaryota"/>
</dbReference>
<dbReference type="GeneTree" id="ENSGT00390000013558"/>
<dbReference type="HOGENOM" id="CLU_044838_0_2_1"/>
<dbReference type="InParanoid" id="P21913"/>
<dbReference type="OrthoDB" id="27969at9989"/>
<dbReference type="PhylomeDB" id="P21913"/>
<dbReference type="TreeFam" id="TF300754"/>
<dbReference type="Reactome" id="R-RNO-71403">
    <property type="pathway name" value="Citric acid cycle (TCA cycle)"/>
</dbReference>
<dbReference type="SABIO-RK" id="P21913"/>
<dbReference type="UniPathway" id="UPA00223">
    <property type="reaction ID" value="UER01006"/>
</dbReference>
<dbReference type="PRO" id="PR:P21913"/>
<dbReference type="Proteomes" id="UP000002494">
    <property type="component" value="Chromosome 5"/>
</dbReference>
<dbReference type="Proteomes" id="UP000234681">
    <property type="component" value="Chromosome 5"/>
</dbReference>
<dbReference type="Bgee" id="ENSRNOG00000007967">
    <property type="expression patterns" value="Expressed in heart and 20 other cell types or tissues"/>
</dbReference>
<dbReference type="GO" id="GO:0005743">
    <property type="term" value="C:mitochondrial inner membrane"/>
    <property type="evidence" value="ECO:0000314"/>
    <property type="project" value="RGD"/>
</dbReference>
<dbReference type="GO" id="GO:0031966">
    <property type="term" value="C:mitochondrial membrane"/>
    <property type="evidence" value="ECO:0000318"/>
    <property type="project" value="GO_Central"/>
</dbReference>
<dbReference type="GO" id="GO:0005739">
    <property type="term" value="C:mitochondrion"/>
    <property type="evidence" value="ECO:0000266"/>
    <property type="project" value="RGD"/>
</dbReference>
<dbReference type="GO" id="GO:0005654">
    <property type="term" value="C:nucleoplasm"/>
    <property type="evidence" value="ECO:0007669"/>
    <property type="project" value="Ensembl"/>
</dbReference>
<dbReference type="GO" id="GO:0005886">
    <property type="term" value="C:plasma membrane"/>
    <property type="evidence" value="ECO:0007669"/>
    <property type="project" value="Ensembl"/>
</dbReference>
<dbReference type="GO" id="GO:0045273">
    <property type="term" value="C:respiratory chain complex II (succinate dehydrogenase)"/>
    <property type="evidence" value="ECO:0000250"/>
    <property type="project" value="UniProtKB"/>
</dbReference>
<dbReference type="GO" id="GO:0051537">
    <property type="term" value="F:2 iron, 2 sulfur cluster binding"/>
    <property type="evidence" value="ECO:0000250"/>
    <property type="project" value="UniProtKB"/>
</dbReference>
<dbReference type="GO" id="GO:0051538">
    <property type="term" value="F:3 iron, 4 sulfur cluster binding"/>
    <property type="evidence" value="ECO:0000250"/>
    <property type="project" value="UniProtKB"/>
</dbReference>
<dbReference type="GO" id="GO:0051539">
    <property type="term" value="F:4 iron, 4 sulfur cluster binding"/>
    <property type="evidence" value="ECO:0000250"/>
    <property type="project" value="UniProtKB"/>
</dbReference>
<dbReference type="GO" id="GO:0009055">
    <property type="term" value="F:electron transfer activity"/>
    <property type="evidence" value="ECO:0007669"/>
    <property type="project" value="InterPro"/>
</dbReference>
<dbReference type="GO" id="GO:0046872">
    <property type="term" value="F:metal ion binding"/>
    <property type="evidence" value="ECO:0007669"/>
    <property type="project" value="UniProtKB-KW"/>
</dbReference>
<dbReference type="GO" id="GO:0008177">
    <property type="term" value="F:succinate dehydrogenase (quinone) activity"/>
    <property type="evidence" value="ECO:0000315"/>
    <property type="project" value="RGD"/>
</dbReference>
<dbReference type="GO" id="GO:0048039">
    <property type="term" value="F:ubiquinone binding"/>
    <property type="evidence" value="ECO:0000250"/>
    <property type="project" value="UniProtKB"/>
</dbReference>
<dbReference type="GO" id="GO:0009060">
    <property type="term" value="P:aerobic respiration"/>
    <property type="evidence" value="ECO:0000318"/>
    <property type="project" value="GO_Central"/>
</dbReference>
<dbReference type="GO" id="GO:0006121">
    <property type="term" value="P:mitochondrial electron transport, succinate to ubiquinone"/>
    <property type="evidence" value="ECO:0000303"/>
    <property type="project" value="ComplexPortal"/>
</dbReference>
<dbReference type="GO" id="GO:0042776">
    <property type="term" value="P:proton motive force-driven mitochondrial ATP synthesis"/>
    <property type="evidence" value="ECO:0000303"/>
    <property type="project" value="ComplexPortal"/>
</dbReference>
<dbReference type="GO" id="GO:0022904">
    <property type="term" value="P:respiratory electron transport chain"/>
    <property type="evidence" value="ECO:0000315"/>
    <property type="project" value="RGD"/>
</dbReference>
<dbReference type="GO" id="GO:0006105">
    <property type="term" value="P:succinate metabolic process"/>
    <property type="evidence" value="ECO:0000315"/>
    <property type="project" value="RGD"/>
</dbReference>
<dbReference type="GO" id="GO:0006099">
    <property type="term" value="P:tricarboxylic acid cycle"/>
    <property type="evidence" value="ECO:0000303"/>
    <property type="project" value="ComplexPortal"/>
</dbReference>
<dbReference type="CDD" id="cd00207">
    <property type="entry name" value="fer2"/>
    <property type="match status" value="1"/>
</dbReference>
<dbReference type="FunFam" id="1.10.1060.10:FF:000029">
    <property type="entry name" value="Succinate dehydrogenase [ubiquinone] iron-sulfur subunit, mitochondrial"/>
    <property type="match status" value="1"/>
</dbReference>
<dbReference type="FunFam" id="3.10.20.30:FF:000007">
    <property type="entry name" value="Succinate dehydrogenase [ubiquinone] iron-sulfur subunit, mitochondrial"/>
    <property type="match status" value="1"/>
</dbReference>
<dbReference type="Gene3D" id="3.10.20.30">
    <property type="match status" value="1"/>
</dbReference>
<dbReference type="Gene3D" id="1.10.1060.10">
    <property type="entry name" value="Alpha-helical ferredoxin"/>
    <property type="match status" value="1"/>
</dbReference>
<dbReference type="InterPro" id="IPR036010">
    <property type="entry name" value="2Fe-2S_ferredoxin-like_sf"/>
</dbReference>
<dbReference type="InterPro" id="IPR001041">
    <property type="entry name" value="2Fe-2S_ferredoxin-type"/>
</dbReference>
<dbReference type="InterPro" id="IPR006058">
    <property type="entry name" value="2Fe2S_fd_BS"/>
</dbReference>
<dbReference type="InterPro" id="IPR017896">
    <property type="entry name" value="4Fe4S_Fe-S-bd"/>
</dbReference>
<dbReference type="InterPro" id="IPR017900">
    <property type="entry name" value="4Fe4S_Fe_S_CS"/>
</dbReference>
<dbReference type="InterPro" id="IPR012675">
    <property type="entry name" value="Beta-grasp_dom_sf"/>
</dbReference>
<dbReference type="InterPro" id="IPR009051">
    <property type="entry name" value="Helical_ferredxn"/>
</dbReference>
<dbReference type="InterPro" id="IPR050573">
    <property type="entry name" value="SDH/FRD_Iron-Sulfur"/>
</dbReference>
<dbReference type="InterPro" id="IPR004489">
    <property type="entry name" value="Succ_DH/fum_Rdtase_Fe-S"/>
</dbReference>
<dbReference type="InterPro" id="IPR025192">
    <property type="entry name" value="Succ_DH/fum_Rdtase_N"/>
</dbReference>
<dbReference type="NCBIfam" id="TIGR00384">
    <property type="entry name" value="dhsB"/>
    <property type="match status" value="1"/>
</dbReference>
<dbReference type="NCBIfam" id="NF004616">
    <property type="entry name" value="PRK05950.1"/>
    <property type="match status" value="1"/>
</dbReference>
<dbReference type="PANTHER" id="PTHR11921:SF29">
    <property type="entry name" value="SUCCINATE DEHYDROGENASE [UBIQUINONE] IRON-SULFUR SUBUNIT, MITOCHONDRIAL"/>
    <property type="match status" value="1"/>
</dbReference>
<dbReference type="PANTHER" id="PTHR11921">
    <property type="entry name" value="SUCCINATE DEHYDROGENASE IRON-SULFUR PROTEIN"/>
    <property type="match status" value="1"/>
</dbReference>
<dbReference type="Pfam" id="PF13085">
    <property type="entry name" value="Fer2_3"/>
    <property type="match status" value="1"/>
</dbReference>
<dbReference type="Pfam" id="PF13534">
    <property type="entry name" value="Fer4_17"/>
    <property type="match status" value="1"/>
</dbReference>
<dbReference type="SUPFAM" id="SSF54292">
    <property type="entry name" value="2Fe-2S ferredoxin-like"/>
    <property type="match status" value="1"/>
</dbReference>
<dbReference type="SUPFAM" id="SSF46548">
    <property type="entry name" value="alpha-helical ferredoxin"/>
    <property type="match status" value="1"/>
</dbReference>
<dbReference type="PROSITE" id="PS00197">
    <property type="entry name" value="2FE2S_FER_1"/>
    <property type="match status" value="1"/>
</dbReference>
<dbReference type="PROSITE" id="PS51085">
    <property type="entry name" value="2FE2S_FER_2"/>
    <property type="match status" value="1"/>
</dbReference>
<dbReference type="PROSITE" id="PS00198">
    <property type="entry name" value="4FE4S_FER_1"/>
    <property type="match status" value="1"/>
</dbReference>
<dbReference type="PROSITE" id="PS51379">
    <property type="entry name" value="4FE4S_FER_2"/>
    <property type="match status" value="1"/>
</dbReference>
<gene>
    <name type="primary">Sdhb</name>
    <name type="synonym">Sdh1</name>
</gene>
<sequence>MAAVVGVSLKRGFSATALGRVGLQFQACREAQTAAAAAPRIKTFAIYRWDPDKAGDKPRMQTYKVDLNKCGPMVLDALIKIKNEIDSTLTFRRSCREGICGSCAMNINGGNTLACTRRIDTDLGKVSKIYPLPHMYVIKDLVPDLSNFYAQYKSIEPYLKKKDESQEGKQQYLQSIEDREKLDGLYECILCACCSTSCPSYWWNGDKYLGPAVLMQAYRWMIDSRDEFTEERLAKLQDPFSLYRCHTIMNCTQTCPKGLNPGKAIAEIKKMMATYKEKRALA</sequence>
<organism>
    <name type="scientific">Rattus norvegicus</name>
    <name type="common">Rat</name>
    <dbReference type="NCBI Taxonomy" id="10116"/>
    <lineage>
        <taxon>Eukaryota</taxon>
        <taxon>Metazoa</taxon>
        <taxon>Chordata</taxon>
        <taxon>Craniata</taxon>
        <taxon>Vertebrata</taxon>
        <taxon>Euteleostomi</taxon>
        <taxon>Mammalia</taxon>
        <taxon>Eutheria</taxon>
        <taxon>Euarchontoglires</taxon>
        <taxon>Glires</taxon>
        <taxon>Rodentia</taxon>
        <taxon>Myomorpha</taxon>
        <taxon>Muroidea</taxon>
        <taxon>Muridae</taxon>
        <taxon>Murinae</taxon>
        <taxon>Rattus</taxon>
    </lineage>
</organism>
<protein>
    <recommendedName>
        <fullName>Succinate dehydrogenase [ubiquinone] iron-sulfur subunit, mitochondrial</fullName>
        <ecNumber evidence="1">1.3.5.1</ecNumber>
    </recommendedName>
    <alternativeName>
        <fullName>Iron-sulfur subunit of complex II</fullName>
        <shortName>Ip</shortName>
    </alternativeName>
    <alternativeName>
        <fullName>Malate dehydrogenase [quinone] iron-sulfur subunit</fullName>
        <ecNumber evidence="3">1.1.5.-</ecNumber>
    </alternativeName>
</protein>
<evidence type="ECO:0000250" key="1">
    <source>
        <dbReference type="UniProtKB" id="P21912"/>
    </source>
</evidence>
<evidence type="ECO:0000250" key="2">
    <source>
        <dbReference type="UniProtKB" id="Q007T0"/>
    </source>
</evidence>
<evidence type="ECO:0000250" key="3">
    <source>
        <dbReference type="UniProtKB" id="Q3T189"/>
    </source>
</evidence>
<evidence type="ECO:0000250" key="4">
    <source>
        <dbReference type="UniProtKB" id="Q9CQA3"/>
    </source>
</evidence>
<evidence type="ECO:0000250" key="5">
    <source>
        <dbReference type="UniProtKB" id="Q9YHT2"/>
    </source>
</evidence>
<evidence type="ECO:0000255" key="6">
    <source>
        <dbReference type="PROSITE-ProRule" id="PRU00465"/>
    </source>
</evidence>
<evidence type="ECO:0000255" key="7">
    <source>
        <dbReference type="PROSITE-ProRule" id="PRU00711"/>
    </source>
</evidence>
<evidence type="ECO:0000305" key="8"/>
<proteinExistence type="evidence at transcript level"/>
<accession>P21913</accession>
<accession>B0BMZ2</accession>
<accession>Q0QEZ3</accession>
<feature type="transit peptide" description="Mitochondrion" evidence="1">
    <location>
        <begin position="1"/>
        <end position="30"/>
    </location>
</feature>
<feature type="chain" id="PRO_0000158693" description="Succinate dehydrogenase [ubiquinone] iron-sulfur subunit, mitochondrial">
    <location>
        <begin position="31"/>
        <end position="282"/>
    </location>
</feature>
<feature type="domain" description="2Fe-2S ferredoxin-type" evidence="6">
    <location>
        <begin position="56"/>
        <end position="135"/>
    </location>
</feature>
<feature type="domain" description="4Fe-4S ferredoxin-type" evidence="7">
    <location>
        <begin position="178"/>
        <end position="208"/>
    </location>
</feature>
<feature type="region of interest" description="Interaction with SDHAF1" evidence="1">
    <location>
        <begin position="148"/>
        <end position="220"/>
    </location>
</feature>
<feature type="binding site" evidence="2">
    <location>
        <position position="95"/>
    </location>
    <ligand>
        <name>[2Fe-2S] cluster</name>
        <dbReference type="ChEBI" id="CHEBI:190135"/>
    </ligand>
</feature>
<feature type="binding site" evidence="2">
    <location>
        <position position="100"/>
    </location>
    <ligand>
        <name>[2Fe-2S] cluster</name>
        <dbReference type="ChEBI" id="CHEBI:190135"/>
    </ligand>
</feature>
<feature type="binding site" evidence="2">
    <location>
        <position position="103"/>
    </location>
    <ligand>
        <name>[2Fe-2S] cluster</name>
        <dbReference type="ChEBI" id="CHEBI:190135"/>
    </ligand>
</feature>
<feature type="binding site" evidence="2">
    <location>
        <position position="115"/>
    </location>
    <ligand>
        <name>[2Fe-2S] cluster</name>
        <dbReference type="ChEBI" id="CHEBI:190135"/>
    </ligand>
</feature>
<feature type="binding site" evidence="2">
    <location>
        <position position="188"/>
    </location>
    <ligand>
        <name>[4Fe-4S] cluster</name>
        <dbReference type="ChEBI" id="CHEBI:49883"/>
    </ligand>
</feature>
<feature type="binding site" evidence="2">
    <location>
        <position position="191"/>
    </location>
    <ligand>
        <name>[4Fe-4S] cluster</name>
        <dbReference type="ChEBI" id="CHEBI:49883"/>
    </ligand>
</feature>
<feature type="binding site" evidence="2">
    <location>
        <position position="194"/>
    </location>
    <ligand>
        <name>[4Fe-4S] cluster</name>
        <dbReference type="ChEBI" id="CHEBI:49883"/>
    </ligand>
</feature>
<feature type="binding site" evidence="2">
    <location>
        <position position="198"/>
    </location>
    <ligand>
        <name>[3Fe-4S] cluster</name>
        <dbReference type="ChEBI" id="CHEBI:21137"/>
    </ligand>
</feature>
<feature type="binding site" evidence="2">
    <location>
        <position position="203"/>
    </location>
    <ligand>
        <name>a ubiquinone</name>
        <dbReference type="ChEBI" id="CHEBI:16389"/>
        <note>ligand shared with DHSD</note>
    </ligand>
</feature>
<feature type="binding site" evidence="2">
    <location>
        <position position="245"/>
    </location>
    <ligand>
        <name>[3Fe-4S] cluster</name>
        <dbReference type="ChEBI" id="CHEBI:21137"/>
    </ligand>
</feature>
<feature type="binding site" evidence="2">
    <location>
        <position position="251"/>
    </location>
    <ligand>
        <name>[3Fe-4S] cluster</name>
        <dbReference type="ChEBI" id="CHEBI:21137"/>
    </ligand>
</feature>
<feature type="binding site" evidence="2">
    <location>
        <position position="255"/>
    </location>
    <ligand>
        <name>[4Fe-4S] cluster</name>
        <dbReference type="ChEBI" id="CHEBI:49883"/>
    </ligand>
</feature>
<feature type="modified residue" description="N6-acetyllysine" evidence="4">
    <location>
        <position position="53"/>
    </location>
</feature>
<feature type="modified residue" description="N6-acetyllysine" evidence="4">
    <location>
        <position position="57"/>
    </location>
</feature>
<feature type="sequence conflict" description="In Ref. 4; no nucleotide entry." evidence="8" ref="4">
    <original>DLG</original>
    <variation>NLN</variation>
    <location>
        <begin position="122"/>
        <end position="124"/>
    </location>
</feature>
<feature type="sequence conflict" description="In Ref. 4; no nucleotide entry." evidence="8" ref="4">
    <original>K</original>
    <variation>R</variation>
    <location>
        <position position="153"/>
    </location>
</feature>
<feature type="sequence conflict" description="In Ref. 4; no nucleotide entry." evidence="8" ref="4">
    <original>D</original>
    <variation>E</variation>
    <location>
        <position position="178"/>
    </location>
</feature>
<feature type="sequence conflict" description="In Ref. 4; no nucleotide entry." evidence="8" ref="4">
    <original>E</original>
    <variation>D</variation>
    <location>
        <position position="227"/>
    </location>
</feature>